<comment type="function">
    <text evidence="1">Involved in protein export. Acts as a chaperone by maintaining the newly synthesized protein in an open conformation. Functions as a peptidyl-prolyl cis-trans isomerase.</text>
</comment>
<comment type="catalytic activity">
    <reaction evidence="1">
        <text>[protein]-peptidylproline (omega=180) = [protein]-peptidylproline (omega=0)</text>
        <dbReference type="Rhea" id="RHEA:16237"/>
        <dbReference type="Rhea" id="RHEA-COMP:10747"/>
        <dbReference type="Rhea" id="RHEA-COMP:10748"/>
        <dbReference type="ChEBI" id="CHEBI:83833"/>
        <dbReference type="ChEBI" id="CHEBI:83834"/>
        <dbReference type="EC" id="5.2.1.8"/>
    </reaction>
</comment>
<comment type="subcellular location">
    <subcellularLocation>
        <location>Cytoplasm</location>
    </subcellularLocation>
    <text evidence="1">About half TF is bound to the ribosome near the polypeptide exit tunnel while the other half is free in the cytoplasm.</text>
</comment>
<comment type="domain">
    <text evidence="1">Consists of 3 domains; the N-terminus binds the ribosome, the middle domain has PPIase activity, while the C-terminus has intrinsic chaperone activity on its own.</text>
</comment>
<comment type="similarity">
    <text evidence="1">Belongs to the FKBP-type PPIase family. Tig subfamily.</text>
</comment>
<reference key="1">
    <citation type="submission" date="2006-06" db="EMBL/GenBank/DDBJ databases">
        <title>Complete sequence of Pseudoalteromonas atlantica T6c.</title>
        <authorList>
            <consortium name="US DOE Joint Genome Institute"/>
            <person name="Copeland A."/>
            <person name="Lucas S."/>
            <person name="Lapidus A."/>
            <person name="Barry K."/>
            <person name="Detter J.C."/>
            <person name="Glavina del Rio T."/>
            <person name="Hammon N."/>
            <person name="Israni S."/>
            <person name="Dalin E."/>
            <person name="Tice H."/>
            <person name="Pitluck S."/>
            <person name="Saunders E."/>
            <person name="Brettin T."/>
            <person name="Bruce D."/>
            <person name="Han C."/>
            <person name="Tapia R."/>
            <person name="Gilna P."/>
            <person name="Schmutz J."/>
            <person name="Larimer F."/>
            <person name="Land M."/>
            <person name="Hauser L."/>
            <person name="Kyrpides N."/>
            <person name="Kim E."/>
            <person name="Karls A.C."/>
            <person name="Bartlett D."/>
            <person name="Higgins B.P."/>
            <person name="Richardson P."/>
        </authorList>
    </citation>
    <scope>NUCLEOTIDE SEQUENCE [LARGE SCALE GENOMIC DNA]</scope>
    <source>
        <strain>T6c / ATCC BAA-1087</strain>
    </source>
</reference>
<name>TIG_PSEA6</name>
<gene>
    <name evidence="1" type="primary">tig</name>
    <name type="ordered locus">Patl_3137</name>
</gene>
<organism>
    <name type="scientific">Pseudoalteromonas atlantica (strain T6c / ATCC BAA-1087)</name>
    <dbReference type="NCBI Taxonomy" id="3042615"/>
    <lineage>
        <taxon>Bacteria</taxon>
        <taxon>Pseudomonadati</taxon>
        <taxon>Pseudomonadota</taxon>
        <taxon>Gammaproteobacteria</taxon>
        <taxon>Alteromonadales</taxon>
        <taxon>Alteromonadaceae</taxon>
        <taxon>Paraglaciecola</taxon>
    </lineage>
</organism>
<sequence length="436" mass="49047">MQVSVETTQGLERRLTITVPAESIDSQVKSRLQQLAKTQRINGFRPGKVPVSVIKKRYGQAVRQEIAGEAMQRNFYEAIVQEKITPAGMPNFEMKTDVDGQDLEFVAAFEVYPEVEVKDVEKIEVEKPVVEITDADLETMMETLRKQHATWKEVKRKSKKDDRVTVDFVGTIDGEEFEGGKAENFELEMGKDRMIPGFEKPIVGAKAGEEVVADVTFPEDYHAEALKGKEAQFKITVNKVEGLSLPKVDEEFAKLFGVEDGDVEALNAEVRKNMQRELEQTLKANVKEQVIEGLLANNEIDLPKALVDQEINALREQAKQRFSQQQGGNVDNLPELPADLFQENARKRVSIGLLLGEIIKTEELKVDSAKVDALIETAASAYEDPQEVIEYYKTNDELMQQMQNVALEEQAVEVLLSKANVKEVNKAFDEIMNKQA</sequence>
<accession>Q15R45</accession>
<feature type="chain" id="PRO_1000022731" description="Trigger factor">
    <location>
        <begin position="1"/>
        <end position="436"/>
    </location>
</feature>
<feature type="domain" description="PPIase FKBP-type" evidence="1">
    <location>
        <begin position="161"/>
        <end position="246"/>
    </location>
</feature>
<keyword id="KW-0131">Cell cycle</keyword>
<keyword id="KW-0132">Cell division</keyword>
<keyword id="KW-0143">Chaperone</keyword>
<keyword id="KW-0963">Cytoplasm</keyword>
<keyword id="KW-0413">Isomerase</keyword>
<keyword id="KW-0697">Rotamase</keyword>
<protein>
    <recommendedName>
        <fullName evidence="1">Trigger factor</fullName>
        <shortName evidence="1">TF</shortName>
        <ecNumber evidence="1">5.2.1.8</ecNumber>
    </recommendedName>
    <alternativeName>
        <fullName evidence="1">PPIase</fullName>
    </alternativeName>
</protein>
<dbReference type="EC" id="5.2.1.8" evidence="1"/>
<dbReference type="EMBL" id="CP000388">
    <property type="protein sequence ID" value="ABG41643.1"/>
    <property type="molecule type" value="Genomic_DNA"/>
</dbReference>
<dbReference type="RefSeq" id="WP_011575878.1">
    <property type="nucleotide sequence ID" value="NC_008228.1"/>
</dbReference>
<dbReference type="SMR" id="Q15R45"/>
<dbReference type="STRING" id="342610.Patl_3137"/>
<dbReference type="KEGG" id="pat:Patl_3137"/>
<dbReference type="eggNOG" id="COG0544">
    <property type="taxonomic scope" value="Bacteria"/>
</dbReference>
<dbReference type="HOGENOM" id="CLU_033058_2_0_6"/>
<dbReference type="OrthoDB" id="9767721at2"/>
<dbReference type="Proteomes" id="UP000001981">
    <property type="component" value="Chromosome"/>
</dbReference>
<dbReference type="GO" id="GO:0005737">
    <property type="term" value="C:cytoplasm"/>
    <property type="evidence" value="ECO:0007669"/>
    <property type="project" value="UniProtKB-SubCell"/>
</dbReference>
<dbReference type="GO" id="GO:0003755">
    <property type="term" value="F:peptidyl-prolyl cis-trans isomerase activity"/>
    <property type="evidence" value="ECO:0007669"/>
    <property type="project" value="UniProtKB-UniRule"/>
</dbReference>
<dbReference type="GO" id="GO:0044183">
    <property type="term" value="F:protein folding chaperone"/>
    <property type="evidence" value="ECO:0007669"/>
    <property type="project" value="TreeGrafter"/>
</dbReference>
<dbReference type="GO" id="GO:0043022">
    <property type="term" value="F:ribosome binding"/>
    <property type="evidence" value="ECO:0007669"/>
    <property type="project" value="TreeGrafter"/>
</dbReference>
<dbReference type="GO" id="GO:0051083">
    <property type="term" value="P:'de novo' cotranslational protein folding"/>
    <property type="evidence" value="ECO:0007669"/>
    <property type="project" value="TreeGrafter"/>
</dbReference>
<dbReference type="GO" id="GO:0051301">
    <property type="term" value="P:cell division"/>
    <property type="evidence" value="ECO:0007669"/>
    <property type="project" value="UniProtKB-KW"/>
</dbReference>
<dbReference type="GO" id="GO:0061077">
    <property type="term" value="P:chaperone-mediated protein folding"/>
    <property type="evidence" value="ECO:0007669"/>
    <property type="project" value="TreeGrafter"/>
</dbReference>
<dbReference type="GO" id="GO:0015031">
    <property type="term" value="P:protein transport"/>
    <property type="evidence" value="ECO:0007669"/>
    <property type="project" value="UniProtKB-UniRule"/>
</dbReference>
<dbReference type="GO" id="GO:0043335">
    <property type="term" value="P:protein unfolding"/>
    <property type="evidence" value="ECO:0007669"/>
    <property type="project" value="TreeGrafter"/>
</dbReference>
<dbReference type="FunFam" id="3.10.50.40:FF:000001">
    <property type="entry name" value="Trigger factor"/>
    <property type="match status" value="1"/>
</dbReference>
<dbReference type="Gene3D" id="3.10.50.40">
    <property type="match status" value="1"/>
</dbReference>
<dbReference type="Gene3D" id="3.30.70.1050">
    <property type="entry name" value="Trigger factor ribosome-binding domain"/>
    <property type="match status" value="1"/>
</dbReference>
<dbReference type="Gene3D" id="1.10.3120.10">
    <property type="entry name" value="Trigger factor, C-terminal domain"/>
    <property type="match status" value="1"/>
</dbReference>
<dbReference type="HAMAP" id="MF_00303">
    <property type="entry name" value="Trigger_factor_Tig"/>
    <property type="match status" value="1"/>
</dbReference>
<dbReference type="InterPro" id="IPR046357">
    <property type="entry name" value="PPIase_dom_sf"/>
</dbReference>
<dbReference type="InterPro" id="IPR001179">
    <property type="entry name" value="PPIase_FKBP_dom"/>
</dbReference>
<dbReference type="InterPro" id="IPR005215">
    <property type="entry name" value="Trig_fac"/>
</dbReference>
<dbReference type="InterPro" id="IPR008880">
    <property type="entry name" value="Trigger_fac_C"/>
</dbReference>
<dbReference type="InterPro" id="IPR037041">
    <property type="entry name" value="Trigger_fac_C_sf"/>
</dbReference>
<dbReference type="InterPro" id="IPR008881">
    <property type="entry name" value="Trigger_fac_ribosome-bd_bac"/>
</dbReference>
<dbReference type="InterPro" id="IPR036611">
    <property type="entry name" value="Trigger_fac_ribosome-bd_sf"/>
</dbReference>
<dbReference type="InterPro" id="IPR027304">
    <property type="entry name" value="Trigger_fact/SurA_dom_sf"/>
</dbReference>
<dbReference type="NCBIfam" id="TIGR00115">
    <property type="entry name" value="tig"/>
    <property type="match status" value="1"/>
</dbReference>
<dbReference type="PANTHER" id="PTHR30560">
    <property type="entry name" value="TRIGGER FACTOR CHAPERONE AND PEPTIDYL-PROLYL CIS/TRANS ISOMERASE"/>
    <property type="match status" value="1"/>
</dbReference>
<dbReference type="PANTHER" id="PTHR30560:SF3">
    <property type="entry name" value="TRIGGER FACTOR-LIKE PROTEIN TIG, CHLOROPLASTIC"/>
    <property type="match status" value="1"/>
</dbReference>
<dbReference type="Pfam" id="PF00254">
    <property type="entry name" value="FKBP_C"/>
    <property type="match status" value="1"/>
</dbReference>
<dbReference type="Pfam" id="PF05698">
    <property type="entry name" value="Trigger_C"/>
    <property type="match status" value="1"/>
</dbReference>
<dbReference type="Pfam" id="PF05697">
    <property type="entry name" value="Trigger_N"/>
    <property type="match status" value="1"/>
</dbReference>
<dbReference type="PIRSF" id="PIRSF003095">
    <property type="entry name" value="Trigger_factor"/>
    <property type="match status" value="1"/>
</dbReference>
<dbReference type="SUPFAM" id="SSF54534">
    <property type="entry name" value="FKBP-like"/>
    <property type="match status" value="1"/>
</dbReference>
<dbReference type="SUPFAM" id="SSF109998">
    <property type="entry name" value="Triger factor/SurA peptide-binding domain-like"/>
    <property type="match status" value="1"/>
</dbReference>
<dbReference type="SUPFAM" id="SSF102735">
    <property type="entry name" value="Trigger factor ribosome-binding domain"/>
    <property type="match status" value="1"/>
</dbReference>
<dbReference type="PROSITE" id="PS50059">
    <property type="entry name" value="FKBP_PPIASE"/>
    <property type="match status" value="1"/>
</dbReference>
<evidence type="ECO:0000255" key="1">
    <source>
        <dbReference type="HAMAP-Rule" id="MF_00303"/>
    </source>
</evidence>
<proteinExistence type="inferred from homology"/>